<protein>
    <recommendedName>
        <fullName evidence="3">Retron Eco8 reverse transcriptase</fullName>
        <shortName evidence="3">RT</shortName>
        <ecNumber evidence="1 6">2.7.7.49</ecNumber>
    </recommendedName>
</protein>
<accession>P0DV59</accession>
<proteinExistence type="evidence at protein level"/>
<reference evidence="7" key="1">
    <citation type="submission" date="2015-08" db="EMBL/GenBank/DDBJ databases">
        <authorList>
            <person name="Babu N.S."/>
            <person name="Beckwith C.J."/>
            <person name="Beseler K.G."/>
            <person name="Brison A."/>
            <person name="Carone J.V."/>
            <person name="Caskin T.P."/>
            <person name="Diamond M."/>
            <person name="Durham M.E."/>
            <person name="Foxe J.M."/>
            <person name="Go M."/>
            <person name="Henderson B.A."/>
            <person name="Jones I.B."/>
            <person name="McGettigan J.A."/>
            <person name="Micheletti S.J."/>
            <person name="Nasrallah M.E."/>
            <person name="Ortiz D."/>
            <person name="Piller C.R."/>
            <person name="Privatt S.R."/>
            <person name="Schneider S.L."/>
            <person name="Sharp S."/>
            <person name="Smith T.C."/>
            <person name="Stanton J.D."/>
            <person name="Ullery H.E."/>
            <person name="Wilson R.J."/>
            <person name="Serrano M.G."/>
            <person name="Buck G."/>
            <person name="Lee V."/>
            <person name="Wang Y."/>
            <person name="Carvalho R."/>
            <person name="Voegtly L."/>
            <person name="Shi R."/>
            <person name="Duckworth R."/>
            <person name="Johnson A."/>
            <person name="Loviza R."/>
            <person name="Walstead R."/>
            <person name="Shah Z."/>
            <person name="Kiflezghi M."/>
            <person name="Wade K."/>
            <person name="Ball S.L."/>
            <person name="Bradley K.W."/>
            <person name="Asai D.J."/>
            <person name="Bowman C.A."/>
            <person name="Russell D.A."/>
            <person name="Pope W.H."/>
            <person name="Jacobs-Sera D."/>
            <person name="Hendrix R.W."/>
            <person name="Hatfull G.F."/>
        </authorList>
    </citation>
    <scope>NUCLEOTIDE SEQUENCE [LARGE SCALE GENOMIC DNA]</scope>
    <source>
        <strain>200499</strain>
    </source>
</reference>
<reference key="2">
    <citation type="journal article" date="2020" name="Cell">
        <title>Bacterial Retrons Function In Anti-Phage Defense.</title>
        <authorList>
            <person name="Millman A."/>
            <person name="Bernheim A."/>
            <person name="Stokar-Avihail A."/>
            <person name="Fedorenko T."/>
            <person name="Voichek M."/>
            <person name="Leavitt A."/>
            <person name="Oppenheimer-Shaanan Y."/>
            <person name="Sorek R."/>
        </authorList>
    </citation>
    <scope>FUNCTION IN ANTIVIRAL DEFENSE</scope>
    <scope>IDENTIFICATION AS A RETRON</scope>
    <scope>MUTAGENESIS OF 200-ASP-ASP-201</scope>
    <source>
        <strain>200499</strain>
    </source>
</reference>
<keyword id="KW-0051">Antiviral defense</keyword>
<keyword id="KW-0460">Magnesium</keyword>
<keyword id="KW-0479">Metal-binding</keyword>
<keyword id="KW-0548">Nucleotidyltransferase</keyword>
<keyword id="KW-0694">RNA-binding</keyword>
<keyword id="KW-0695">RNA-directed DNA polymerase</keyword>
<keyword id="KW-0808">Transferase</keyword>
<evidence type="ECO:0000255" key="1">
    <source>
        <dbReference type="PROSITE-ProRule" id="PRU00405"/>
    </source>
</evidence>
<evidence type="ECO:0000269" key="2">
    <source>
    </source>
</evidence>
<evidence type="ECO:0000303" key="3">
    <source>
    </source>
</evidence>
<evidence type="ECO:0000303" key="4">
    <source ref="1"/>
</evidence>
<evidence type="ECO:0000305" key="5"/>
<evidence type="ECO:0000305" key="6">
    <source>
    </source>
</evidence>
<evidence type="ECO:0000312" key="7">
    <source>
        <dbReference type="EMBL" id="CUA03353.1"/>
    </source>
</evidence>
<feature type="chain" id="PRO_0000456016" description="Retron Eco8 reverse transcriptase">
    <location>
        <begin position="1"/>
        <end position="374"/>
    </location>
</feature>
<feature type="domain" description="Reverse transcriptase" evidence="1">
    <location>
        <begin position="25"/>
        <end position="252"/>
    </location>
</feature>
<feature type="binding site" evidence="1">
    <location>
        <position position="107"/>
    </location>
    <ligand>
        <name>Mg(2+)</name>
        <dbReference type="ChEBI" id="CHEBI:18420"/>
        <note>catalytic</note>
    </ligand>
</feature>
<feature type="binding site" evidence="1">
    <location>
        <position position="200"/>
    </location>
    <ligand>
        <name>Mg(2+)</name>
        <dbReference type="ChEBI" id="CHEBI:18420"/>
        <note>catalytic</note>
    </ligand>
</feature>
<feature type="binding site" evidence="1">
    <location>
        <position position="201"/>
    </location>
    <ligand>
        <name>Mg(2+)</name>
        <dbReference type="ChEBI" id="CHEBI:18420"/>
        <note>catalytic</note>
    </ligand>
</feature>
<feature type="mutagenesis site" description="No longer protects against SECphi6 infection." evidence="2">
    <original>DD</original>
    <variation>AA</variation>
    <location>
        <begin position="200"/>
        <end position="201"/>
    </location>
</feature>
<name>RT8_ECOLX</name>
<organism>
    <name type="scientific">Escherichia coli</name>
    <dbReference type="NCBI Taxonomy" id="562"/>
    <lineage>
        <taxon>Bacteria</taxon>
        <taxon>Pseudomonadati</taxon>
        <taxon>Pseudomonadota</taxon>
        <taxon>Gammaproteobacteria</taxon>
        <taxon>Enterobacterales</taxon>
        <taxon>Enterobacteriaceae</taxon>
        <taxon>Escherichia</taxon>
    </lineage>
</organism>
<dbReference type="EC" id="2.7.7.49" evidence="1 6"/>
<dbReference type="EMBL" id="CYGJ01000003">
    <property type="protein sequence ID" value="CUA03353.1"/>
    <property type="molecule type" value="Genomic_DNA"/>
</dbReference>
<dbReference type="RefSeq" id="WP_053898075.1">
    <property type="nucleotide sequence ID" value="NZ_CYGJ01000003.1"/>
</dbReference>
<dbReference type="SMR" id="P0DV59"/>
<dbReference type="GO" id="GO:0046872">
    <property type="term" value="F:metal ion binding"/>
    <property type="evidence" value="ECO:0007669"/>
    <property type="project" value="UniProtKB-KW"/>
</dbReference>
<dbReference type="GO" id="GO:0003723">
    <property type="term" value="F:RNA binding"/>
    <property type="evidence" value="ECO:0007669"/>
    <property type="project" value="UniProtKB-KW"/>
</dbReference>
<dbReference type="GO" id="GO:0003964">
    <property type="term" value="F:RNA-directed DNA polymerase activity"/>
    <property type="evidence" value="ECO:0007669"/>
    <property type="project" value="UniProtKB-KW"/>
</dbReference>
<dbReference type="GO" id="GO:0051607">
    <property type="term" value="P:defense response to virus"/>
    <property type="evidence" value="ECO:0007669"/>
    <property type="project" value="UniProtKB-KW"/>
</dbReference>
<dbReference type="InterPro" id="IPR043502">
    <property type="entry name" value="DNA/RNA_pol_sf"/>
</dbReference>
<dbReference type="InterPro" id="IPR051083">
    <property type="entry name" value="GrpII_Intron_Splice-Mob/Def"/>
</dbReference>
<dbReference type="InterPro" id="IPR000123">
    <property type="entry name" value="Reverse_transcriptase_msDNA"/>
</dbReference>
<dbReference type="InterPro" id="IPR000477">
    <property type="entry name" value="RT_dom"/>
</dbReference>
<dbReference type="PANTHER" id="PTHR34047">
    <property type="entry name" value="NUCLEAR INTRON MATURASE 1, MITOCHONDRIAL-RELATED"/>
    <property type="match status" value="1"/>
</dbReference>
<dbReference type="PANTHER" id="PTHR34047:SF7">
    <property type="entry name" value="RNA-DIRECTED DNA POLYMERASE"/>
    <property type="match status" value="1"/>
</dbReference>
<dbReference type="Pfam" id="PF00078">
    <property type="entry name" value="RVT_1"/>
    <property type="match status" value="1"/>
</dbReference>
<dbReference type="PRINTS" id="PR00866">
    <property type="entry name" value="RNADNAPOLMS"/>
</dbReference>
<dbReference type="SUPFAM" id="SSF56672">
    <property type="entry name" value="DNA/RNA polymerases"/>
    <property type="match status" value="1"/>
</dbReference>
<dbReference type="PROSITE" id="PS50878">
    <property type="entry name" value="RT_POL"/>
    <property type="match status" value="1"/>
</dbReference>
<comment type="function">
    <text evidence="2">Reverse transcriptase (RT) component of antiviral defense system retron Eco8, composed of this RT, the following endonuclease and a non-coding RNA (ncRNA) encoded between them. Expression of retron Eco8 confers protection against bacteriophages T4, T6, T7 and SECphi4, SECphi6 and SECphi18. At multiplicity of infection (MOI) of 0.02 cultures slow growth when infected with SECphi4 but do not collapse, at MOI 2 cultures collapse. Responsible for synthesis of msDNA (a branched molecule with RNA linked by a 2',5'-phosphodiester bond to ssDNA). The retron transcript serves as primer (from a conserved internal G residue) and template for the reaction, and codes for the RT.</text>
</comment>
<comment type="catalytic activity">
    <reaction evidence="1 6">
        <text>DNA(n) + a 2'-deoxyribonucleoside 5'-triphosphate = DNA(n+1) + diphosphate</text>
        <dbReference type="Rhea" id="RHEA:22508"/>
        <dbReference type="Rhea" id="RHEA-COMP:17339"/>
        <dbReference type="Rhea" id="RHEA-COMP:17340"/>
        <dbReference type="ChEBI" id="CHEBI:33019"/>
        <dbReference type="ChEBI" id="CHEBI:61560"/>
        <dbReference type="ChEBI" id="CHEBI:173112"/>
        <dbReference type="EC" id="2.7.7.49"/>
    </reaction>
</comment>
<comment type="similarity">
    <text evidence="5">Belongs to the bacterial reverse transcriptase family.</text>
</comment>
<gene>
    <name evidence="5" type="primary">ret</name>
    <name evidence="4" type="ORF">ERS139198_01421</name>
    <name type="ORF">Ga0119705_103345</name>
</gene>
<sequence length="374" mass="43208">MKTKKMILVDKVFYEKILSVESFKENIITQSAIPKISNKEVRLISSGSKIFYAINNTSPHSHVQLRLNRFFLSHIPLNSAAKAFVRGGSYLKYLEPHIYGSSYCRLDISSFFNNISFDDVKQSLSPYIKDEYLIGTEQKLIDAILNSVGYESPIRKDKGMIIPMGFRTSPAISNIVFRKMDLLIQDFCAKKGVIYSRYADDMLFSNPRESKLLMSDYFIDEISSLLSIMGFNINQSKYISREKEISINGYVIENKGGNGSIGTIRLSKSKLNTVLKVTHALAQNIPYKNICNKYIKVRLKEKNIKYESKKDEFEKKYYRDQLINYLGGYRSYLISLVKFHSEYKCVNSDFIIQINGILNDIQNHIQKIKKNRRL</sequence>